<name>CDC6_PYRAB</name>
<gene>
    <name type="primary">cdc6</name>
    <name type="ordered locus">PYRAB01220</name>
    <name type="ORF">PAB2265</name>
</gene>
<evidence type="ECO:0000255" key="1">
    <source>
        <dbReference type="HAMAP-Rule" id="MF_01407"/>
    </source>
</evidence>
<evidence type="ECO:0000269" key="2">
    <source>
    </source>
</evidence>
<evidence type="ECO:0000305" key="3"/>
<comment type="function">
    <text evidence="1 2">Involved in regulation of DNA replication (By similarity). Binds specifically to the oriC region.</text>
</comment>
<comment type="similarity">
    <text evidence="1">Belongs to the CDC6/cdc18 family.</text>
</comment>
<comment type="sequence caution" evidence="3">
    <conflict type="erroneous initiation">
        <sequence resource="EMBL-CDS" id="CAB49046"/>
    </conflict>
    <text>Extended N-terminus.</text>
</comment>
<comment type="sequence caution" evidence="3">
    <conflict type="erroneous initiation">
        <sequence resource="EMBL-CDS" id="CCE69498"/>
    </conflict>
    <text>Extended N-terminus.</text>
</comment>
<protein>
    <recommendedName>
        <fullName evidence="1">ORC1-type DNA replication protein</fullName>
    </recommendedName>
</protein>
<accession>Q9V2F2</accession>
<accession>G8ZFV7</accession>
<proteinExistence type="evidence at protein level"/>
<organism>
    <name type="scientific">Pyrococcus abyssi (strain GE5 / Orsay)</name>
    <dbReference type="NCBI Taxonomy" id="272844"/>
    <lineage>
        <taxon>Archaea</taxon>
        <taxon>Methanobacteriati</taxon>
        <taxon>Methanobacteriota</taxon>
        <taxon>Thermococci</taxon>
        <taxon>Thermococcales</taxon>
        <taxon>Thermococcaceae</taxon>
        <taxon>Pyrococcus</taxon>
    </lineage>
</organism>
<sequence>MSEGEQLHLDKLFERLLKARKIFKNKEVLRHSYTPKDLPHRHEQIEALAQILVPVLKGETPSNIFVYGKTGTGKTVTVKFVTEELKKVSQKYNIPVEVIYINCEIVDTHYRVLANIVNHFKDETGIEVPLVGWPTDEVYAKLKQVIDMKERFVIIVLDEIDKLVKKSGDEVLYSLTRINTELKRAKVSVIGISNDLKFKEYLDPRVLSSLSEEEVVFPPYDANQLKDILTQRAEEAFYPGVLEEGVIPLCAALAAREHGDARKALDLLRVAGEIAEREGASKVTEKHVWRAQEKIEQDMMEEVIKTLPLQSKVLLYAIVLLDENGDLPANTGEVYSVYRELCEYLDLEPLTQRRISDLINELDMLGIINAKVVSKGRYGRTKEIRLNVTPYKIRNVFRYDYAIQPLLTVSLKGGQRRLL</sequence>
<keyword id="KW-0067">ATP-binding</keyword>
<keyword id="KW-0235">DNA replication</keyword>
<keyword id="KW-0238">DNA-binding</keyword>
<keyword id="KW-0547">Nucleotide-binding</keyword>
<dbReference type="EMBL" id="AJ248283">
    <property type="protein sequence ID" value="CAB49046.1"/>
    <property type="status" value="ALT_INIT"/>
    <property type="molecule type" value="Genomic_DNA"/>
</dbReference>
<dbReference type="EMBL" id="HE613800">
    <property type="protein sequence ID" value="CCE69498.1"/>
    <property type="status" value="ALT_INIT"/>
    <property type="molecule type" value="Genomic_DNA"/>
</dbReference>
<dbReference type="PIR" id="G75199">
    <property type="entry name" value="G75199"/>
</dbReference>
<dbReference type="RefSeq" id="WP_048146489.1">
    <property type="nucleotide sequence ID" value="NC_000868.1"/>
</dbReference>
<dbReference type="SMR" id="Q9V2F2"/>
<dbReference type="STRING" id="272844.PAB2265"/>
<dbReference type="KEGG" id="pab:PAB2265"/>
<dbReference type="PATRIC" id="fig|272844.11.peg.135"/>
<dbReference type="eggNOG" id="arCOG00467">
    <property type="taxonomic scope" value="Archaea"/>
</dbReference>
<dbReference type="HOGENOM" id="CLU_025112_3_1_2"/>
<dbReference type="OrthoDB" id="195574at2157"/>
<dbReference type="PhylomeDB" id="Q9V2F2"/>
<dbReference type="Proteomes" id="UP000000810">
    <property type="component" value="Chromosome"/>
</dbReference>
<dbReference type="Proteomes" id="UP000009139">
    <property type="component" value="Chromosome"/>
</dbReference>
<dbReference type="GO" id="GO:0005524">
    <property type="term" value="F:ATP binding"/>
    <property type="evidence" value="ECO:0007669"/>
    <property type="project" value="UniProtKB-UniRule"/>
</dbReference>
<dbReference type="GO" id="GO:0016887">
    <property type="term" value="F:ATP hydrolysis activity"/>
    <property type="evidence" value="ECO:0007669"/>
    <property type="project" value="InterPro"/>
</dbReference>
<dbReference type="GO" id="GO:0003677">
    <property type="term" value="F:DNA binding"/>
    <property type="evidence" value="ECO:0007669"/>
    <property type="project" value="UniProtKB-KW"/>
</dbReference>
<dbReference type="GO" id="GO:0006260">
    <property type="term" value="P:DNA replication"/>
    <property type="evidence" value="ECO:0007669"/>
    <property type="project" value="UniProtKB-UniRule"/>
</dbReference>
<dbReference type="CDD" id="cd00009">
    <property type="entry name" value="AAA"/>
    <property type="match status" value="1"/>
</dbReference>
<dbReference type="CDD" id="cd08768">
    <property type="entry name" value="Cdc6_C"/>
    <property type="match status" value="1"/>
</dbReference>
<dbReference type="CDD" id="cd18139">
    <property type="entry name" value="HLD_clamp_RarA"/>
    <property type="match status" value="1"/>
</dbReference>
<dbReference type="FunFam" id="1.10.8.60:FF:000073">
    <property type="entry name" value="ORC1-type DNA replication protein"/>
    <property type="match status" value="1"/>
</dbReference>
<dbReference type="FunFam" id="3.40.50.300:FF:000930">
    <property type="entry name" value="ORC1-type DNA replication protein"/>
    <property type="match status" value="1"/>
</dbReference>
<dbReference type="Gene3D" id="1.10.8.60">
    <property type="match status" value="1"/>
</dbReference>
<dbReference type="Gene3D" id="3.40.50.300">
    <property type="entry name" value="P-loop containing nucleotide triphosphate hydrolases"/>
    <property type="match status" value="1"/>
</dbReference>
<dbReference type="Gene3D" id="1.10.10.10">
    <property type="entry name" value="Winged helix-like DNA-binding domain superfamily/Winged helix DNA-binding domain"/>
    <property type="match status" value="1"/>
</dbReference>
<dbReference type="HAMAP" id="MF_01407">
    <property type="entry name" value="ORC1_type_DNA_replic_protein"/>
    <property type="match status" value="1"/>
</dbReference>
<dbReference type="InterPro" id="IPR003593">
    <property type="entry name" value="AAA+_ATPase"/>
</dbReference>
<dbReference type="InterPro" id="IPR049945">
    <property type="entry name" value="AAA_22"/>
</dbReference>
<dbReference type="InterPro" id="IPR015163">
    <property type="entry name" value="Cdc6_C"/>
</dbReference>
<dbReference type="InterPro" id="IPR055237">
    <property type="entry name" value="Cdc6_lid"/>
</dbReference>
<dbReference type="InterPro" id="IPR050311">
    <property type="entry name" value="ORC1/CDC6"/>
</dbReference>
<dbReference type="InterPro" id="IPR014277">
    <property type="entry name" value="Orc1/Cdc6_arc"/>
</dbReference>
<dbReference type="InterPro" id="IPR027417">
    <property type="entry name" value="P-loop_NTPase"/>
</dbReference>
<dbReference type="InterPro" id="IPR036388">
    <property type="entry name" value="WH-like_DNA-bd_sf"/>
</dbReference>
<dbReference type="InterPro" id="IPR036390">
    <property type="entry name" value="WH_DNA-bd_sf"/>
</dbReference>
<dbReference type="NCBIfam" id="TIGR02928">
    <property type="entry name" value="orc1/cdc6 family replication initiation protein"/>
    <property type="match status" value="1"/>
</dbReference>
<dbReference type="NCBIfam" id="NF001625">
    <property type="entry name" value="PRK00411.1-3"/>
    <property type="match status" value="1"/>
</dbReference>
<dbReference type="PANTHER" id="PTHR10763">
    <property type="entry name" value="CELL DIVISION CONTROL PROTEIN 6-RELATED"/>
    <property type="match status" value="1"/>
</dbReference>
<dbReference type="PANTHER" id="PTHR10763:SF22">
    <property type="entry name" value="ORC1-TYPE DNA REPLICATION PROTEIN"/>
    <property type="match status" value="1"/>
</dbReference>
<dbReference type="Pfam" id="PF13401">
    <property type="entry name" value="AAA_22"/>
    <property type="match status" value="1"/>
</dbReference>
<dbReference type="Pfam" id="PF09079">
    <property type="entry name" value="Cdc6_C"/>
    <property type="match status" value="1"/>
</dbReference>
<dbReference type="Pfam" id="PF22703">
    <property type="entry name" value="Cdc6_lid"/>
    <property type="match status" value="1"/>
</dbReference>
<dbReference type="SMART" id="SM00382">
    <property type="entry name" value="AAA"/>
    <property type="match status" value="1"/>
</dbReference>
<dbReference type="SMART" id="SM01074">
    <property type="entry name" value="Cdc6_C"/>
    <property type="match status" value="1"/>
</dbReference>
<dbReference type="SUPFAM" id="SSF52540">
    <property type="entry name" value="P-loop containing nucleoside triphosphate hydrolases"/>
    <property type="match status" value="1"/>
</dbReference>
<dbReference type="SUPFAM" id="SSF46785">
    <property type="entry name" value="Winged helix' DNA-binding domain"/>
    <property type="match status" value="1"/>
</dbReference>
<feature type="chain" id="PRO_0000151011" description="ORC1-type DNA replication protein">
    <location>
        <begin position="1"/>
        <end position="419"/>
    </location>
</feature>
<feature type="binding site" evidence="1">
    <location>
        <begin position="72"/>
        <end position="76"/>
    </location>
    <ligand>
        <name>ATP</name>
        <dbReference type="ChEBI" id="CHEBI:30616"/>
    </ligand>
</feature>
<feature type="binding site" evidence="1">
    <location>
        <position position="220"/>
    </location>
    <ligand>
        <name>ATP</name>
        <dbReference type="ChEBI" id="CHEBI:30616"/>
    </ligand>
</feature>
<feature type="binding site" evidence="1">
    <location>
        <position position="232"/>
    </location>
    <ligand>
        <name>ATP</name>
        <dbReference type="ChEBI" id="CHEBI:30616"/>
    </ligand>
</feature>
<reference key="1">
    <citation type="journal article" date="2003" name="Mol. Microbiol.">
        <title>An integrated analysis of the genome of the hyperthermophilic archaeon Pyrococcus abyssi.</title>
        <authorList>
            <person name="Cohen G.N."/>
            <person name="Barbe V."/>
            <person name="Flament D."/>
            <person name="Galperin M."/>
            <person name="Heilig R."/>
            <person name="Lecompte O."/>
            <person name="Poch O."/>
            <person name="Prieur D."/>
            <person name="Querellou J."/>
            <person name="Ripp R."/>
            <person name="Thierry J.-C."/>
            <person name="Van der Oost J."/>
            <person name="Weissenbach J."/>
            <person name="Zivanovic Y."/>
            <person name="Forterre P."/>
        </authorList>
    </citation>
    <scope>NUCLEOTIDE SEQUENCE [LARGE SCALE GENOMIC DNA]</scope>
    <source>
        <strain>GE5 / Orsay</strain>
    </source>
</reference>
<reference key="2">
    <citation type="journal article" date="2012" name="Curr. Microbiol.">
        <title>Re-annotation of two hyperthermophilic archaea Pyrococcus abyssi GE5 and Pyrococcus furiosus DSM 3638.</title>
        <authorList>
            <person name="Gao J."/>
            <person name="Wang J."/>
        </authorList>
    </citation>
    <scope>GENOME REANNOTATION</scope>
    <source>
        <strain>GE5 / Orsay</strain>
    </source>
</reference>
<reference key="3">
    <citation type="journal article" date="2007" name="Nucleic Acids Res.">
        <title>Genomewide and biochemical analyses of DNA-binding activity of Cdc6/Orc1 and Mcm proteins in Pyrococcus sp.</title>
        <authorList>
            <person name="Matsunaga F."/>
            <person name="Glatigny A."/>
            <person name="Mucchielli-Giorgi M.H."/>
            <person name="Agier N."/>
            <person name="Delacroix H."/>
            <person name="Marisa L."/>
            <person name="Durosay P."/>
            <person name="Ishino Y."/>
            <person name="Aggerbeck L."/>
            <person name="Forterre P."/>
        </authorList>
    </citation>
    <scope>FUNCTION</scope>
    <scope>DNA-BINDING</scope>
</reference>